<reference evidence="4" key="1">
    <citation type="journal article" date="2010" name="Biochim. Biophys. Acta">
        <title>Human CRISP-3 binds serum alpha1B-glycoprotein across species.</title>
        <authorList>
            <person name="Udby L."/>
            <person name="Johnsen A.H."/>
            <person name="Borregaard N."/>
        </authorList>
    </citation>
    <scope>PROTEIN SEQUENCE</scope>
    <scope>INTERACTION WITH CRISP3</scope>
    <scope>GLYCOSYLATION</scope>
    <scope>VARIANTS ASN-5 AND ARG-7</scope>
    <source>
        <tissue evidence="2">Serum</tissue>
    </source>
</reference>
<name>A1BG_RABIT</name>
<keyword id="KW-0903">Direct protein sequencing</keyword>
<keyword id="KW-0325">Glycoprotein</keyword>
<keyword id="KW-0393">Immunoglobulin domain</keyword>
<keyword id="KW-1185">Reference proteome</keyword>
<keyword id="KW-0964">Secreted</keyword>
<sequence length="13" mass="1491">ATFFDPQPRLLAD</sequence>
<protein>
    <recommendedName>
        <fullName evidence="1">Alpha-1B-glycoprotein</fullName>
    </recommendedName>
    <alternativeName>
        <fullName evidence="1">Alpha-1-B glycoprotein</fullName>
    </alternativeName>
</protein>
<accession>P85980</accession>
<dbReference type="InParanoid" id="P85980"/>
<dbReference type="Proteomes" id="UP000001811">
    <property type="component" value="Unplaced"/>
</dbReference>
<dbReference type="GO" id="GO:0005576">
    <property type="term" value="C:extracellular region"/>
    <property type="evidence" value="ECO:0007669"/>
    <property type="project" value="UniProtKB-SubCell"/>
</dbReference>
<feature type="chain" id="PRO_0000348607" description="Alpha-1B-glycoprotein">
    <location>
        <begin position="1"/>
        <end position="13" status="greater than"/>
    </location>
</feature>
<feature type="sequence variant" evidence="2">
    <original>D</original>
    <variation>N</variation>
    <location>
        <position position="5"/>
    </location>
</feature>
<feature type="sequence variant" evidence="2">
    <original>Q</original>
    <variation>R</variation>
    <location>
        <position position="7"/>
    </location>
</feature>
<feature type="non-terminal residue" evidence="3">
    <location>
        <position position="13"/>
    </location>
</feature>
<proteinExistence type="evidence at protein level"/>
<comment type="subunit">
    <text evidence="2">Interacts with CRISP3.</text>
</comment>
<comment type="subcellular location">
    <subcellularLocation>
        <location evidence="4">Secreted</location>
    </subcellularLocation>
</comment>
<comment type="tissue specificity">
    <text evidence="4">Plasma.</text>
</comment>
<comment type="PTM">
    <text evidence="2">Glycosylated.</text>
</comment>
<evidence type="ECO:0000250" key="1">
    <source>
        <dbReference type="UniProtKB" id="P39090"/>
    </source>
</evidence>
<evidence type="ECO:0000269" key="2">
    <source>
    </source>
</evidence>
<evidence type="ECO:0000303" key="3">
    <source>
    </source>
</evidence>
<evidence type="ECO:0000305" key="4"/>
<gene>
    <name evidence="3" type="primary">A1BG</name>
</gene>
<organism>
    <name type="scientific">Oryctolagus cuniculus</name>
    <name type="common">Rabbit</name>
    <dbReference type="NCBI Taxonomy" id="9986"/>
    <lineage>
        <taxon>Eukaryota</taxon>
        <taxon>Metazoa</taxon>
        <taxon>Chordata</taxon>
        <taxon>Craniata</taxon>
        <taxon>Vertebrata</taxon>
        <taxon>Euteleostomi</taxon>
        <taxon>Mammalia</taxon>
        <taxon>Eutheria</taxon>
        <taxon>Euarchontoglires</taxon>
        <taxon>Glires</taxon>
        <taxon>Lagomorpha</taxon>
        <taxon>Leporidae</taxon>
        <taxon>Oryctolagus</taxon>
    </lineage>
</organism>